<proteinExistence type="inferred from homology"/>
<keyword id="KW-0963">Cytoplasm</keyword>
<keyword id="KW-0690">Ribosome biogenesis</keyword>
<keyword id="KW-0694">RNA-binding</keyword>
<keyword id="KW-0699">rRNA-binding</keyword>
<feature type="chain" id="PRO_1000148428" description="Dual-action ribosomal maturation protein DarP">
    <location>
        <begin position="1"/>
        <end position="183"/>
    </location>
</feature>
<comment type="function">
    <text evidence="1">Member of a network of 50S ribosomal subunit biogenesis factors which assembles along the 30S-50S interface, preventing incorrect 23S rRNA structures from forming. Promotes peptidyl transferase center (PTC) maturation.</text>
</comment>
<comment type="subcellular location">
    <subcellularLocation>
        <location evidence="1">Cytoplasm</location>
    </subcellularLocation>
    <text evidence="1">Associates with late stage pre-50S ribosomal subunits.</text>
</comment>
<comment type="similarity">
    <text evidence="1">Belongs to the DarP family.</text>
</comment>
<dbReference type="EMBL" id="CU928162">
    <property type="protein sequence ID" value="CAR11044.1"/>
    <property type="molecule type" value="Genomic_DNA"/>
</dbReference>
<dbReference type="SMR" id="B7MSW9"/>
<dbReference type="KEGG" id="ecq:ECED1_5089"/>
<dbReference type="HOGENOM" id="CLU_106757_2_0_6"/>
<dbReference type="Proteomes" id="UP000000748">
    <property type="component" value="Chromosome"/>
</dbReference>
<dbReference type="GO" id="GO:0005829">
    <property type="term" value="C:cytosol"/>
    <property type="evidence" value="ECO:0007669"/>
    <property type="project" value="TreeGrafter"/>
</dbReference>
<dbReference type="GO" id="GO:0043022">
    <property type="term" value="F:ribosome binding"/>
    <property type="evidence" value="ECO:0007669"/>
    <property type="project" value="UniProtKB-UniRule"/>
</dbReference>
<dbReference type="GO" id="GO:0019843">
    <property type="term" value="F:rRNA binding"/>
    <property type="evidence" value="ECO:0007669"/>
    <property type="project" value="UniProtKB-UniRule"/>
</dbReference>
<dbReference type="GO" id="GO:1902626">
    <property type="term" value="P:assembly of large subunit precursor of preribosome"/>
    <property type="evidence" value="ECO:0007669"/>
    <property type="project" value="UniProtKB-UniRule"/>
</dbReference>
<dbReference type="CDD" id="cd16331">
    <property type="entry name" value="YjgA-like"/>
    <property type="match status" value="1"/>
</dbReference>
<dbReference type="FunFam" id="1.10.60.30:FF:000001">
    <property type="entry name" value="UPF0307 protein YjgA"/>
    <property type="match status" value="1"/>
</dbReference>
<dbReference type="FunFam" id="1.10.60.30:FF:000002">
    <property type="entry name" value="UPF0307 protein YjgA"/>
    <property type="match status" value="1"/>
</dbReference>
<dbReference type="Gene3D" id="1.10.60.30">
    <property type="entry name" value="PSPTO4464-like domains"/>
    <property type="match status" value="2"/>
</dbReference>
<dbReference type="HAMAP" id="MF_00765">
    <property type="entry name" value="DarP"/>
    <property type="match status" value="1"/>
</dbReference>
<dbReference type="InterPro" id="IPR006839">
    <property type="entry name" value="DarP"/>
</dbReference>
<dbReference type="InterPro" id="IPR023153">
    <property type="entry name" value="DarP_sf"/>
</dbReference>
<dbReference type="NCBIfam" id="NF003593">
    <property type="entry name" value="PRK05255.1-1"/>
    <property type="match status" value="1"/>
</dbReference>
<dbReference type="PANTHER" id="PTHR38101">
    <property type="entry name" value="UPF0307 PROTEIN YJGA"/>
    <property type="match status" value="1"/>
</dbReference>
<dbReference type="PANTHER" id="PTHR38101:SF1">
    <property type="entry name" value="UPF0307 PROTEIN YJGA"/>
    <property type="match status" value="1"/>
</dbReference>
<dbReference type="Pfam" id="PF04751">
    <property type="entry name" value="DarP"/>
    <property type="match status" value="1"/>
</dbReference>
<dbReference type="PIRSF" id="PIRSF016183">
    <property type="entry name" value="UCP016183"/>
    <property type="match status" value="1"/>
</dbReference>
<dbReference type="SUPFAM" id="SSF158710">
    <property type="entry name" value="PSPTO4464-like"/>
    <property type="match status" value="1"/>
</dbReference>
<protein>
    <recommendedName>
        <fullName evidence="1">Dual-action ribosomal maturation protein DarP</fullName>
    </recommendedName>
    <alternativeName>
        <fullName evidence="1">Large ribosomal subunit assembly factor DarP</fullName>
    </alternativeName>
</protein>
<reference key="1">
    <citation type="journal article" date="2009" name="PLoS Genet.">
        <title>Organised genome dynamics in the Escherichia coli species results in highly diverse adaptive paths.</title>
        <authorList>
            <person name="Touchon M."/>
            <person name="Hoede C."/>
            <person name="Tenaillon O."/>
            <person name="Barbe V."/>
            <person name="Baeriswyl S."/>
            <person name="Bidet P."/>
            <person name="Bingen E."/>
            <person name="Bonacorsi S."/>
            <person name="Bouchier C."/>
            <person name="Bouvet O."/>
            <person name="Calteau A."/>
            <person name="Chiapello H."/>
            <person name="Clermont O."/>
            <person name="Cruveiller S."/>
            <person name="Danchin A."/>
            <person name="Diard M."/>
            <person name="Dossat C."/>
            <person name="Karoui M.E."/>
            <person name="Frapy E."/>
            <person name="Garry L."/>
            <person name="Ghigo J.M."/>
            <person name="Gilles A.M."/>
            <person name="Johnson J."/>
            <person name="Le Bouguenec C."/>
            <person name="Lescat M."/>
            <person name="Mangenot S."/>
            <person name="Martinez-Jehanne V."/>
            <person name="Matic I."/>
            <person name="Nassif X."/>
            <person name="Oztas S."/>
            <person name="Petit M.A."/>
            <person name="Pichon C."/>
            <person name="Rouy Z."/>
            <person name="Ruf C.S."/>
            <person name="Schneider D."/>
            <person name="Tourret J."/>
            <person name="Vacherie B."/>
            <person name="Vallenet D."/>
            <person name="Medigue C."/>
            <person name="Rocha E.P.C."/>
            <person name="Denamur E."/>
        </authorList>
    </citation>
    <scope>NUCLEOTIDE SEQUENCE [LARGE SCALE GENOMIC DNA]</scope>
    <source>
        <strain>ED1a</strain>
    </source>
</reference>
<gene>
    <name evidence="1" type="primary">darP</name>
    <name type="ordered locus">ECED1_5089</name>
</gene>
<accession>B7MSW9</accession>
<evidence type="ECO:0000255" key="1">
    <source>
        <dbReference type="HAMAP-Rule" id="MF_00765"/>
    </source>
</evidence>
<name>DARP_ECO81</name>
<sequence length="183" mass="21359">MTKQPEDWLDDVPGDDIEDEDDEIIWVSKSEIKRDAEELKRLGAEIVDLGKNALDKIPLDADLRAAIELAQRIKMEGRRRQLQLIGKMLRQRDVEPIRQALDKLKNRHNQQVVLFHKLENLRDRLIDQGDDAIAEVLNLWPDADRQQLRTLIRNAKKEKEGNKPPKSARQIFQYLRELAENEG</sequence>
<organism>
    <name type="scientific">Escherichia coli O81 (strain ED1a)</name>
    <dbReference type="NCBI Taxonomy" id="585397"/>
    <lineage>
        <taxon>Bacteria</taxon>
        <taxon>Pseudomonadati</taxon>
        <taxon>Pseudomonadota</taxon>
        <taxon>Gammaproteobacteria</taxon>
        <taxon>Enterobacterales</taxon>
        <taxon>Enterobacteriaceae</taxon>
        <taxon>Escherichia</taxon>
    </lineage>
</organism>